<gene>
    <name evidence="1" type="primary">hfq</name>
    <name type="ordered locus">BQ05340</name>
</gene>
<name>HFQ_BARQU</name>
<proteinExistence type="inferred from homology"/>
<protein>
    <recommendedName>
        <fullName evidence="1">RNA-binding protein Hfq</fullName>
    </recommendedName>
</protein>
<feature type="chain" id="PRO_0000095623" description="RNA-binding protein Hfq">
    <location>
        <begin position="1"/>
        <end position="79"/>
    </location>
</feature>
<feature type="domain" description="Sm" evidence="2">
    <location>
        <begin position="10"/>
        <end position="70"/>
    </location>
</feature>
<sequence>MAERSQHLQDVFLNTVRKQKISLTIFLVNGVKLTGIVTSFDNFCVLLRRDGHAQLVYKHAISTIMPGQPVQMFEGESSE</sequence>
<reference key="1">
    <citation type="journal article" date="2004" name="Proc. Natl. Acad. Sci. U.S.A.">
        <title>The louse-borne human pathogen Bartonella quintana is a genomic derivative of the zoonotic agent Bartonella henselae.</title>
        <authorList>
            <person name="Alsmark U.C.M."/>
            <person name="Frank A.C."/>
            <person name="Karlberg E.O."/>
            <person name="Legault B.-A."/>
            <person name="Ardell D.H."/>
            <person name="Canbaeck B."/>
            <person name="Eriksson A.-S."/>
            <person name="Naeslund A.K."/>
            <person name="Handley S.A."/>
            <person name="Huvet M."/>
            <person name="La Scola B."/>
            <person name="Holmberg M."/>
            <person name="Andersson S.G.E."/>
        </authorList>
    </citation>
    <scope>NUCLEOTIDE SEQUENCE [LARGE SCALE GENOMIC DNA]</scope>
    <source>
        <strain>Toulouse</strain>
    </source>
</reference>
<keyword id="KW-0694">RNA-binding</keyword>
<keyword id="KW-0346">Stress response</keyword>
<accession>Q6G014</accession>
<dbReference type="EMBL" id="BX897700">
    <property type="protein sequence ID" value="CAF26029.1"/>
    <property type="molecule type" value="Genomic_DNA"/>
</dbReference>
<dbReference type="RefSeq" id="WP_011179303.1">
    <property type="nucleotide sequence ID" value="NC_005955.1"/>
</dbReference>
<dbReference type="SMR" id="Q6G014"/>
<dbReference type="GeneID" id="56533100"/>
<dbReference type="KEGG" id="bqu:BQ05340"/>
<dbReference type="eggNOG" id="COG1923">
    <property type="taxonomic scope" value="Bacteria"/>
</dbReference>
<dbReference type="HOGENOM" id="CLU_113688_0_0_5"/>
<dbReference type="OrthoDB" id="9799751at2"/>
<dbReference type="Proteomes" id="UP000000597">
    <property type="component" value="Chromosome"/>
</dbReference>
<dbReference type="GO" id="GO:0005829">
    <property type="term" value="C:cytosol"/>
    <property type="evidence" value="ECO:0007669"/>
    <property type="project" value="TreeGrafter"/>
</dbReference>
<dbReference type="GO" id="GO:0003723">
    <property type="term" value="F:RNA binding"/>
    <property type="evidence" value="ECO:0007669"/>
    <property type="project" value="UniProtKB-UniRule"/>
</dbReference>
<dbReference type="GO" id="GO:0006355">
    <property type="term" value="P:regulation of DNA-templated transcription"/>
    <property type="evidence" value="ECO:0007669"/>
    <property type="project" value="InterPro"/>
</dbReference>
<dbReference type="GO" id="GO:0043487">
    <property type="term" value="P:regulation of RNA stability"/>
    <property type="evidence" value="ECO:0007669"/>
    <property type="project" value="TreeGrafter"/>
</dbReference>
<dbReference type="GO" id="GO:0045974">
    <property type="term" value="P:regulation of translation, ncRNA-mediated"/>
    <property type="evidence" value="ECO:0007669"/>
    <property type="project" value="TreeGrafter"/>
</dbReference>
<dbReference type="CDD" id="cd01716">
    <property type="entry name" value="Hfq"/>
    <property type="match status" value="1"/>
</dbReference>
<dbReference type="Gene3D" id="2.30.30.100">
    <property type="match status" value="1"/>
</dbReference>
<dbReference type="HAMAP" id="MF_00436">
    <property type="entry name" value="Hfq"/>
    <property type="match status" value="1"/>
</dbReference>
<dbReference type="InterPro" id="IPR005001">
    <property type="entry name" value="Hfq"/>
</dbReference>
<dbReference type="InterPro" id="IPR010920">
    <property type="entry name" value="LSM_dom_sf"/>
</dbReference>
<dbReference type="InterPro" id="IPR047575">
    <property type="entry name" value="Sm"/>
</dbReference>
<dbReference type="NCBIfam" id="TIGR02383">
    <property type="entry name" value="Hfq"/>
    <property type="match status" value="1"/>
</dbReference>
<dbReference type="NCBIfam" id="NF001602">
    <property type="entry name" value="PRK00395.1"/>
    <property type="match status" value="1"/>
</dbReference>
<dbReference type="PANTHER" id="PTHR34772">
    <property type="entry name" value="RNA-BINDING PROTEIN HFQ"/>
    <property type="match status" value="1"/>
</dbReference>
<dbReference type="PANTHER" id="PTHR34772:SF1">
    <property type="entry name" value="RNA-BINDING PROTEIN HFQ"/>
    <property type="match status" value="1"/>
</dbReference>
<dbReference type="Pfam" id="PF17209">
    <property type="entry name" value="Hfq"/>
    <property type="match status" value="1"/>
</dbReference>
<dbReference type="SUPFAM" id="SSF50182">
    <property type="entry name" value="Sm-like ribonucleoproteins"/>
    <property type="match status" value="1"/>
</dbReference>
<dbReference type="PROSITE" id="PS52002">
    <property type="entry name" value="SM"/>
    <property type="match status" value="1"/>
</dbReference>
<organism>
    <name type="scientific">Bartonella quintana (strain Toulouse)</name>
    <name type="common">Rochalimaea quintana</name>
    <dbReference type="NCBI Taxonomy" id="283165"/>
    <lineage>
        <taxon>Bacteria</taxon>
        <taxon>Pseudomonadati</taxon>
        <taxon>Pseudomonadota</taxon>
        <taxon>Alphaproteobacteria</taxon>
        <taxon>Hyphomicrobiales</taxon>
        <taxon>Bartonellaceae</taxon>
        <taxon>Bartonella</taxon>
    </lineage>
</organism>
<evidence type="ECO:0000255" key="1">
    <source>
        <dbReference type="HAMAP-Rule" id="MF_00436"/>
    </source>
</evidence>
<evidence type="ECO:0000255" key="2">
    <source>
        <dbReference type="PROSITE-ProRule" id="PRU01346"/>
    </source>
</evidence>
<comment type="function">
    <text evidence="1">RNA chaperone that binds small regulatory RNA (sRNAs) and mRNAs to facilitate mRNA translational regulation in response to envelope stress, environmental stress and changes in metabolite concentrations. Also binds with high specificity to tRNAs.</text>
</comment>
<comment type="subunit">
    <text evidence="1">Homohexamer.</text>
</comment>
<comment type="similarity">
    <text evidence="1">Belongs to the Hfq family.</text>
</comment>